<dbReference type="EMBL" id="AY856481">
    <property type="protein sequence ID" value="AAW48528.1"/>
    <property type="molecule type" value="mRNA"/>
</dbReference>
<dbReference type="SMR" id="Q5I4B8"/>
<dbReference type="TCDB" id="1.C.38.1.4">
    <property type="family name" value="the pore-forming equinatoxin (equinatoxin) family"/>
</dbReference>
<dbReference type="GO" id="GO:0005576">
    <property type="term" value="C:extracellular region"/>
    <property type="evidence" value="ECO:0007669"/>
    <property type="project" value="UniProtKB-SubCell"/>
</dbReference>
<dbReference type="GO" id="GO:0042151">
    <property type="term" value="C:nematocyst"/>
    <property type="evidence" value="ECO:0007669"/>
    <property type="project" value="UniProtKB-SubCell"/>
</dbReference>
<dbReference type="GO" id="GO:0044218">
    <property type="term" value="C:other organism cell membrane"/>
    <property type="evidence" value="ECO:0007669"/>
    <property type="project" value="UniProtKB-KW"/>
</dbReference>
<dbReference type="GO" id="GO:0046930">
    <property type="term" value="C:pore complex"/>
    <property type="evidence" value="ECO:0007669"/>
    <property type="project" value="InterPro"/>
</dbReference>
<dbReference type="GO" id="GO:0015267">
    <property type="term" value="F:channel activity"/>
    <property type="evidence" value="ECO:0007669"/>
    <property type="project" value="InterPro"/>
</dbReference>
<dbReference type="GO" id="GO:0090729">
    <property type="term" value="F:toxin activity"/>
    <property type="evidence" value="ECO:0007669"/>
    <property type="project" value="UniProtKB-KW"/>
</dbReference>
<dbReference type="GO" id="GO:0051715">
    <property type="term" value="P:cytolysis in another organism"/>
    <property type="evidence" value="ECO:0007669"/>
    <property type="project" value="InterPro"/>
</dbReference>
<dbReference type="GO" id="GO:0006812">
    <property type="term" value="P:monoatomic cation transport"/>
    <property type="evidence" value="ECO:0007669"/>
    <property type="project" value="InterPro"/>
</dbReference>
<dbReference type="GO" id="GO:0046931">
    <property type="term" value="P:pore complex assembly"/>
    <property type="evidence" value="ECO:0007669"/>
    <property type="project" value="InterPro"/>
</dbReference>
<dbReference type="FunFam" id="2.60.270.20:FF:000001">
    <property type="entry name" value="DELTA-actitoxin-Afr1a"/>
    <property type="match status" value="1"/>
</dbReference>
<dbReference type="Gene3D" id="2.60.270.20">
    <property type="entry name" value="Cytolysin/lectin"/>
    <property type="match status" value="1"/>
</dbReference>
<dbReference type="InterPro" id="IPR050677">
    <property type="entry name" value="Actinoporin_PFT"/>
</dbReference>
<dbReference type="InterPro" id="IPR009104">
    <property type="entry name" value="Anemon_actinoporin-like"/>
</dbReference>
<dbReference type="InterPro" id="IPR015926">
    <property type="entry name" value="Cytolysin/lectin"/>
</dbReference>
<dbReference type="PANTHER" id="PTHR40388">
    <property type="entry name" value="BRYOPORIN"/>
    <property type="match status" value="1"/>
</dbReference>
<dbReference type="PANTHER" id="PTHR40388:SF1">
    <property type="entry name" value="BRYOPORIN"/>
    <property type="match status" value="1"/>
</dbReference>
<dbReference type="Pfam" id="PF06369">
    <property type="entry name" value="Anemone_cytotox"/>
    <property type="match status" value="1"/>
</dbReference>
<dbReference type="SUPFAM" id="SSF63724">
    <property type="entry name" value="Cytolysin/lectin"/>
    <property type="match status" value="1"/>
</dbReference>
<proteinExistence type="evidence at protein level"/>
<organism>
    <name type="scientific">Oulactis orientalis</name>
    <name type="common">Japan anemone</name>
    <name type="synonym">Anthopleura orientalis</name>
    <dbReference type="NCBI Taxonomy" id="308032"/>
    <lineage>
        <taxon>Eukaryota</taxon>
        <taxon>Metazoa</taxon>
        <taxon>Cnidaria</taxon>
        <taxon>Anthozoa</taxon>
        <taxon>Hexacorallia</taxon>
        <taxon>Actiniaria</taxon>
        <taxon>Actiniidae</taxon>
        <taxon>Oulactis</taxon>
    </lineage>
</organism>
<feature type="chain" id="PRO_0000239261" description="DELTA-actitoxin-Oor1a">
    <location>
        <begin position="1"/>
        <end position="165"/>
    </location>
</feature>
<feature type="region of interest" description="N-terminal region" evidence="1">
    <location>
        <begin position="1"/>
        <end position="17"/>
    </location>
</feature>
<feature type="region of interest" description="Trp-rich region, which is important for the binding to lipid membrane" evidence="4">
    <location>
        <begin position="92"/>
        <end position="107"/>
    </location>
</feature>
<feature type="binding site" evidence="3">
    <location>
        <position position="41"/>
    </location>
    <ligand>
        <name>phosphocholine</name>
        <dbReference type="ChEBI" id="CHEBI:295975"/>
    </ligand>
</feature>
<feature type="binding site" evidence="3">
    <location>
        <position position="74"/>
    </location>
    <ligand>
        <name>phosphocholine</name>
        <dbReference type="ChEBI" id="CHEBI:295975"/>
    </ligand>
</feature>
<feature type="binding site" evidence="3">
    <location>
        <position position="92"/>
    </location>
    <ligand>
        <name>phosphocholine</name>
        <dbReference type="ChEBI" id="CHEBI:295975"/>
    </ligand>
</feature>
<feature type="binding site" evidence="3">
    <location>
        <position position="94"/>
    </location>
    <ligand>
        <name>phosphocholine</name>
        <dbReference type="ChEBI" id="CHEBI:295975"/>
    </ligand>
</feature>
<feature type="binding site" evidence="3">
    <location>
        <position position="125"/>
    </location>
    <ligand>
        <name>phosphocholine</name>
        <dbReference type="ChEBI" id="CHEBI:295975"/>
    </ligand>
</feature>
<feature type="site" description="Important in the initial contact with the lipid membrane" evidence="1">
    <location>
        <position position="100"/>
    </location>
</feature>
<reference key="1">
    <citation type="journal article" date="2005" name="Bioorg. Khim.">
        <title>Primary structures of actinoporins from sea anemone Oulactis orientalis.</title>
        <authorList>
            <person name="Il'ina A.P."/>
            <person name="Monastyrnaia M.M."/>
            <person name="Isaeva M.P."/>
            <person name="Guzev K.V."/>
            <person name="Rasskazov V.A."/>
            <person name="Kozlovskaya E.P."/>
        </authorList>
    </citation>
    <scope>NUCLEOTIDE SEQUENCE [MRNA]</scope>
</reference>
<reference key="2">
    <citation type="journal article" date="2005" name="Bioorg. Khim.">
        <title>Actinoporins from the Sea of Japan anemone Oulactis orientalis: isolation and partial characterization.</title>
        <authorList>
            <person name="Il'ina A.P."/>
            <person name="Monastyrnaia M.M."/>
            <person name="Sokotun I.N."/>
            <person name="Egorov T.A."/>
            <person name="Nazarenko I.A."/>
            <person name="Likhatskaia G.N."/>
            <person name="Kozlovskaya E.P."/>
        </authorList>
    </citation>
    <scope>PROTEIN SEQUENCE OF 1-8</scope>
</reference>
<reference key="3">
    <citation type="journal article" date="2010" name="Toxicon">
        <title>Actinoporins from the sea anemones, tropical Radianthus macrodactylus and northern Oulactis orientalis: comparative analysis of structure-function relationships.</title>
        <authorList>
            <person name="Monastyrnaya M."/>
            <person name="Leychenko E."/>
            <person name="Isaeva M."/>
            <person name="Likhatskaya G."/>
            <person name="Zelepuga E."/>
            <person name="Kostina E."/>
            <person name="Trifonov E."/>
            <person name="Nurminski E."/>
            <person name="Kozlovskaya E."/>
        </authorList>
    </citation>
    <scope>3D-STRUCTURE MODELING</scope>
</reference>
<reference key="4">
    <citation type="journal article" date="2009" name="Toxicon">
        <title>Molecular mechanism of pore formation by actinoporins.</title>
        <authorList>
            <person name="Kristan K.C."/>
            <person name="Viero G."/>
            <person name="Dalla Serra M."/>
            <person name="Macek P."/>
            <person name="Anderluh G."/>
        </authorList>
    </citation>
    <scope>REVIEW</scope>
</reference>
<reference key="5">
    <citation type="journal article" date="2012" name="Toxicon">
        <title>Development of a rational nomenclature for naming peptide and protein toxins from sea anemones.</title>
        <authorList>
            <person name="Oliveira J.S."/>
            <person name="Fuentes-Silva D."/>
            <person name="King G.F."/>
        </authorList>
    </citation>
    <scope>NOMENCLATURE</scope>
</reference>
<name>ACTPA_OULOR</name>
<comment type="function">
    <text evidence="3">Pore-forming protein that forms cations-selective hydrophilic pores of around 1 nm and causes cardiac stimulation and cytolysis. Pore formation is a multi-step process that involves specific recognition of membrane sphingomyelin (but neither cholesterol nor phosphatidylcholine) using aromatic rich region and adjacent phosphocholine (POC) binding site, firm binding to the membrane (mainly driven by hydrophobic interactions) accompanied by the transfer of the N-terminal region to the lipid-water interface and finally pore formation after oligomerization of monomers. Cytolytic effects include red blood cells hemolysis, platelet aggregation and lysis, cytotoxic and cytostatic effects on fibroblasts. Lethality in mammals has been ascribed to severe vasospasm of coronary vessels, cardiac arrhythmia, and inotropic effects.</text>
</comment>
<comment type="subunit">
    <text evidence="2">Octamer or nonamer in membranes. Monomer in the soluble state.</text>
</comment>
<comment type="subcellular location">
    <subcellularLocation>
        <location evidence="2">Secreted</location>
    </subcellularLocation>
    <subcellularLocation>
        <location evidence="3">Nematocyst</location>
    </subcellularLocation>
    <subcellularLocation>
        <location evidence="2">Target cell membrane</location>
    </subcellularLocation>
    <text evidence="2">Forms an alpha-helical membrane channel in the prey.</text>
</comment>
<comment type="domain">
    <text evidence="4">Composed of a long N-terminal alpha-helix and a core region rich in beta-sheet structures. Before the pore formation, the alpha-helix binds the lipid membrane, partitions into the lipid-water interface and stabilizes the monomeric molecule on the membrane. Finally, it traverses the bilayer, thus forming the transmembrane pore.</text>
</comment>
<comment type="similarity">
    <text evidence="8">Belongs to the actinoporin family. Sea anemone subfamily.</text>
</comment>
<sequence>ATFRVLAKVLAELGKVSRKIAVGVDNESGGSWTALNAYFRSGTTDVILPDLVPNQKALLYRGGKDTGPVATGVVGVLAYAMSDGNTLAILFSVPYDYNLYSNWWNVKVYSGKRRADQGMSEDLSYGNPYGGDNGWHARKLAYGLKERGFMKSSAQSILEIHATKA</sequence>
<evidence type="ECO:0000250" key="1"/>
<evidence type="ECO:0000250" key="2">
    <source>
        <dbReference type="UniProtKB" id="B9W5G6"/>
    </source>
</evidence>
<evidence type="ECO:0000250" key="3">
    <source>
        <dbReference type="UniProtKB" id="P07845"/>
    </source>
</evidence>
<evidence type="ECO:0000250" key="4">
    <source>
        <dbReference type="UniProtKB" id="P61914"/>
    </source>
</evidence>
<evidence type="ECO:0000303" key="5">
    <source>
    </source>
</evidence>
<evidence type="ECO:0000303" key="6">
    <source>
    </source>
</evidence>
<evidence type="ECO:0000303" key="7">
    <source>
    </source>
</evidence>
<evidence type="ECO:0000305" key="8"/>
<accession>Q5I4B8</accession>
<keyword id="KW-0204">Cytolysis</keyword>
<keyword id="KW-0903">Direct protein sequencing</keyword>
<keyword id="KW-0406">Ion transport</keyword>
<keyword id="KW-0472">Membrane</keyword>
<keyword id="KW-0166">Nematocyst</keyword>
<keyword id="KW-0964">Secreted</keyword>
<keyword id="KW-1052">Target cell membrane</keyword>
<keyword id="KW-1053">Target membrane</keyword>
<keyword id="KW-0800">Toxin</keyword>
<keyword id="KW-0812">Transmembrane</keyword>
<keyword id="KW-0813">Transport</keyword>
<protein>
    <recommendedName>
        <fullName evidence="7">DELTA-actitoxin-Oor1a</fullName>
        <shortName evidence="7">DELTA-AITX-Oor1a</shortName>
    </recommendedName>
    <alternativeName>
        <fullName evidence="5 6">Actinoporin Or-A</fullName>
    </alternativeName>
    <alternativeName>
        <fullName evidence="5">Cytolysin Or-A</fullName>
    </alternativeName>
</protein>